<reference key="1">
    <citation type="journal article" date="2010" name="J. Bacteriol.">
        <title>Genome sequence of the deep-rooted Yersinia pestis strain Angola reveals new insights into the evolution and pangenome of the plague bacterium.</title>
        <authorList>
            <person name="Eppinger M."/>
            <person name="Worsham P.L."/>
            <person name="Nikolich M.P."/>
            <person name="Riley D.R."/>
            <person name="Sebastian Y."/>
            <person name="Mou S."/>
            <person name="Achtman M."/>
            <person name="Lindler L.E."/>
            <person name="Ravel J."/>
        </authorList>
    </citation>
    <scope>NUCLEOTIDE SEQUENCE [LARGE SCALE GENOMIC DNA]</scope>
    <source>
        <strain>Angola</strain>
    </source>
</reference>
<organism>
    <name type="scientific">Yersinia pestis bv. Antiqua (strain Angola)</name>
    <dbReference type="NCBI Taxonomy" id="349746"/>
    <lineage>
        <taxon>Bacteria</taxon>
        <taxon>Pseudomonadati</taxon>
        <taxon>Pseudomonadota</taxon>
        <taxon>Gammaproteobacteria</taxon>
        <taxon>Enterobacterales</taxon>
        <taxon>Yersiniaceae</taxon>
        <taxon>Yersinia</taxon>
    </lineage>
</organism>
<feature type="chain" id="PRO_0000348883" description="tRNA-cytidine(32) 2-sulfurtransferase">
    <location>
        <begin position="1"/>
        <end position="313"/>
    </location>
</feature>
<feature type="region of interest" description="Disordered" evidence="2">
    <location>
        <begin position="288"/>
        <end position="313"/>
    </location>
</feature>
<feature type="short sequence motif" description="PP-loop motif" evidence="1">
    <location>
        <begin position="47"/>
        <end position="52"/>
    </location>
</feature>
<feature type="compositionally biased region" description="Basic and acidic residues" evidence="2">
    <location>
        <begin position="299"/>
        <end position="313"/>
    </location>
</feature>
<feature type="binding site" evidence="1">
    <location>
        <position position="122"/>
    </location>
    <ligand>
        <name>[4Fe-4S] cluster</name>
        <dbReference type="ChEBI" id="CHEBI:49883"/>
    </ligand>
</feature>
<feature type="binding site" evidence="1">
    <location>
        <position position="125"/>
    </location>
    <ligand>
        <name>[4Fe-4S] cluster</name>
        <dbReference type="ChEBI" id="CHEBI:49883"/>
    </ligand>
</feature>
<feature type="binding site" evidence="1">
    <location>
        <position position="213"/>
    </location>
    <ligand>
        <name>[4Fe-4S] cluster</name>
        <dbReference type="ChEBI" id="CHEBI:49883"/>
    </ligand>
</feature>
<sequence length="313" mass="35799">MLEKQSVNQKEQYNFNKLQKRLRRNVGQAIADFNMIEEGDRVMVCLSGGKDSYTMLDILQSLQKSAPINFSLIAVNLDQKQPGFPEDILPAYLDKQGVEYKIVEENTYGIVKEIIPEGKTTCSLCSRLRRGILYRTATELGATKIALGHHRDDILQTLFLNMFYGGKLKGMPPKLMSDDGKHIVIRPLAYCREKDIERFAVAREYPIIPCNLCGSQPNLQRQVIKDMLRDWDKQYPGRIETMFSAMQNVVPSHLNDHKLFDFKSITHDSDIIDGGDLAFDREALPLNPVGWQPEDDEDTEKRPPVRLDVLEIK</sequence>
<accession>A9R8Q5</accession>
<name>TTCA_YERPG</name>
<protein>
    <recommendedName>
        <fullName evidence="1">tRNA-cytidine(32) 2-sulfurtransferase</fullName>
        <ecNumber evidence="1">2.8.1.-</ecNumber>
    </recommendedName>
    <alternativeName>
        <fullName evidence="1">Two-thiocytidine biosynthesis protein A</fullName>
    </alternativeName>
    <alternativeName>
        <fullName evidence="1">tRNA 2-thiocytidine biosynthesis protein TtcA</fullName>
    </alternativeName>
</protein>
<proteinExistence type="inferred from homology"/>
<evidence type="ECO:0000255" key="1">
    <source>
        <dbReference type="HAMAP-Rule" id="MF_01850"/>
    </source>
</evidence>
<evidence type="ECO:0000256" key="2">
    <source>
        <dbReference type="SAM" id="MobiDB-lite"/>
    </source>
</evidence>
<gene>
    <name evidence="1" type="primary">ttcA</name>
    <name type="ordered locus">YpAngola_A2206</name>
</gene>
<keyword id="KW-0004">4Fe-4S</keyword>
<keyword id="KW-0067">ATP-binding</keyword>
<keyword id="KW-0963">Cytoplasm</keyword>
<keyword id="KW-0408">Iron</keyword>
<keyword id="KW-0411">Iron-sulfur</keyword>
<keyword id="KW-0460">Magnesium</keyword>
<keyword id="KW-0479">Metal-binding</keyword>
<keyword id="KW-0547">Nucleotide-binding</keyword>
<keyword id="KW-0694">RNA-binding</keyword>
<keyword id="KW-0808">Transferase</keyword>
<keyword id="KW-0819">tRNA processing</keyword>
<keyword id="KW-0820">tRNA-binding</keyword>
<comment type="function">
    <text evidence="1">Catalyzes the ATP-dependent 2-thiolation of cytidine in position 32 of tRNA, to form 2-thiocytidine (s(2)C32). The sulfur atoms are provided by the cysteine/cysteine desulfurase (IscS) system.</text>
</comment>
<comment type="catalytic activity">
    <reaction evidence="1">
        <text>cytidine(32) in tRNA + S-sulfanyl-L-cysteinyl-[cysteine desulfurase] + AH2 + ATP = 2-thiocytidine(32) in tRNA + L-cysteinyl-[cysteine desulfurase] + A + AMP + diphosphate + H(+)</text>
        <dbReference type="Rhea" id="RHEA:57048"/>
        <dbReference type="Rhea" id="RHEA-COMP:10288"/>
        <dbReference type="Rhea" id="RHEA-COMP:12157"/>
        <dbReference type="Rhea" id="RHEA-COMP:12158"/>
        <dbReference type="Rhea" id="RHEA-COMP:14821"/>
        <dbReference type="ChEBI" id="CHEBI:13193"/>
        <dbReference type="ChEBI" id="CHEBI:15378"/>
        <dbReference type="ChEBI" id="CHEBI:17499"/>
        <dbReference type="ChEBI" id="CHEBI:29950"/>
        <dbReference type="ChEBI" id="CHEBI:30616"/>
        <dbReference type="ChEBI" id="CHEBI:33019"/>
        <dbReference type="ChEBI" id="CHEBI:61963"/>
        <dbReference type="ChEBI" id="CHEBI:82748"/>
        <dbReference type="ChEBI" id="CHEBI:141453"/>
        <dbReference type="ChEBI" id="CHEBI:456215"/>
    </reaction>
    <physiologicalReaction direction="left-to-right" evidence="1">
        <dbReference type="Rhea" id="RHEA:57049"/>
    </physiologicalReaction>
</comment>
<comment type="cofactor">
    <cofactor evidence="1">
        <name>Mg(2+)</name>
        <dbReference type="ChEBI" id="CHEBI:18420"/>
    </cofactor>
</comment>
<comment type="cofactor">
    <cofactor evidence="1">
        <name>[4Fe-4S] cluster</name>
        <dbReference type="ChEBI" id="CHEBI:49883"/>
    </cofactor>
    <text evidence="1">Binds 1 [4Fe-4S] cluster per subunit. The cluster is chelated by three Cys residues, the fourth Fe has a free coordination site that may bind a sulfur atom transferred from the persulfide of IscS.</text>
</comment>
<comment type="pathway">
    <text evidence="1">tRNA modification.</text>
</comment>
<comment type="subunit">
    <text evidence="1">Homodimer.</text>
</comment>
<comment type="subcellular location">
    <subcellularLocation>
        <location evidence="1">Cytoplasm</location>
    </subcellularLocation>
</comment>
<comment type="miscellaneous">
    <text evidence="1">The thiolation reaction likely consists of two steps: a first activation step by ATP to form an adenylated intermediate of the target base of tRNA, and a second nucleophilic substitution step of the sulfur (S) atom supplied by the hydrosulfide attached to the Fe-S cluster.</text>
</comment>
<comment type="similarity">
    <text evidence="1">Belongs to the TtcA family.</text>
</comment>
<dbReference type="EC" id="2.8.1.-" evidence="1"/>
<dbReference type="EMBL" id="CP000901">
    <property type="protein sequence ID" value="ABX86162.1"/>
    <property type="molecule type" value="Genomic_DNA"/>
</dbReference>
<dbReference type="RefSeq" id="WP_002210992.1">
    <property type="nucleotide sequence ID" value="NZ_CP009935.1"/>
</dbReference>
<dbReference type="SMR" id="A9R8Q5"/>
<dbReference type="GeneID" id="57976339"/>
<dbReference type="KEGG" id="ypg:YpAngola_A2206"/>
<dbReference type="PATRIC" id="fig|349746.12.peg.3206"/>
<dbReference type="GO" id="GO:0005737">
    <property type="term" value="C:cytoplasm"/>
    <property type="evidence" value="ECO:0007669"/>
    <property type="project" value="UniProtKB-SubCell"/>
</dbReference>
<dbReference type="GO" id="GO:0051539">
    <property type="term" value="F:4 iron, 4 sulfur cluster binding"/>
    <property type="evidence" value="ECO:0007669"/>
    <property type="project" value="UniProtKB-UniRule"/>
</dbReference>
<dbReference type="GO" id="GO:0005524">
    <property type="term" value="F:ATP binding"/>
    <property type="evidence" value="ECO:0007669"/>
    <property type="project" value="UniProtKB-UniRule"/>
</dbReference>
<dbReference type="GO" id="GO:0000287">
    <property type="term" value="F:magnesium ion binding"/>
    <property type="evidence" value="ECO:0007669"/>
    <property type="project" value="UniProtKB-UniRule"/>
</dbReference>
<dbReference type="GO" id="GO:0016783">
    <property type="term" value="F:sulfurtransferase activity"/>
    <property type="evidence" value="ECO:0007669"/>
    <property type="project" value="UniProtKB-UniRule"/>
</dbReference>
<dbReference type="GO" id="GO:0000049">
    <property type="term" value="F:tRNA binding"/>
    <property type="evidence" value="ECO:0007669"/>
    <property type="project" value="UniProtKB-KW"/>
</dbReference>
<dbReference type="GO" id="GO:0034227">
    <property type="term" value="P:tRNA thio-modification"/>
    <property type="evidence" value="ECO:0007669"/>
    <property type="project" value="UniProtKB-UniRule"/>
</dbReference>
<dbReference type="CDD" id="cd24138">
    <property type="entry name" value="TtcA-like"/>
    <property type="match status" value="1"/>
</dbReference>
<dbReference type="Gene3D" id="3.40.50.620">
    <property type="entry name" value="HUPs"/>
    <property type="match status" value="1"/>
</dbReference>
<dbReference type="HAMAP" id="MF_01850">
    <property type="entry name" value="TtcA"/>
    <property type="match status" value="1"/>
</dbReference>
<dbReference type="InterPro" id="IPR014729">
    <property type="entry name" value="Rossmann-like_a/b/a_fold"/>
</dbReference>
<dbReference type="InterPro" id="IPR011063">
    <property type="entry name" value="TilS/TtcA_N"/>
</dbReference>
<dbReference type="InterPro" id="IPR012089">
    <property type="entry name" value="tRNA_Cyd_32_2_STrfase"/>
</dbReference>
<dbReference type="InterPro" id="IPR035107">
    <property type="entry name" value="tRNA_thiolation_TtcA_Ctu1"/>
</dbReference>
<dbReference type="NCBIfam" id="NF007972">
    <property type="entry name" value="PRK10696.1"/>
    <property type="match status" value="1"/>
</dbReference>
<dbReference type="PANTHER" id="PTHR43686:SF1">
    <property type="entry name" value="AMINOTRAN_5 DOMAIN-CONTAINING PROTEIN"/>
    <property type="match status" value="1"/>
</dbReference>
<dbReference type="PANTHER" id="PTHR43686">
    <property type="entry name" value="SULFURTRANSFERASE-RELATED"/>
    <property type="match status" value="1"/>
</dbReference>
<dbReference type="Pfam" id="PF01171">
    <property type="entry name" value="ATP_bind_3"/>
    <property type="match status" value="1"/>
</dbReference>
<dbReference type="PIRSF" id="PIRSF004976">
    <property type="entry name" value="ATPase_YdaO"/>
    <property type="match status" value="1"/>
</dbReference>
<dbReference type="SUPFAM" id="SSF52402">
    <property type="entry name" value="Adenine nucleotide alpha hydrolases-like"/>
    <property type="match status" value="1"/>
</dbReference>